<keyword id="KW-0067">ATP-binding</keyword>
<keyword id="KW-0963">Cytoplasm</keyword>
<keyword id="KW-0418">Kinase</keyword>
<keyword id="KW-0545">Nucleotide biosynthesis</keyword>
<keyword id="KW-0547">Nucleotide-binding</keyword>
<keyword id="KW-0808">Transferase</keyword>
<name>KAD_BURMS</name>
<feature type="chain" id="PRO_1000058800" description="Adenylate kinase">
    <location>
        <begin position="1"/>
        <end position="220"/>
    </location>
</feature>
<feature type="region of interest" description="NMP" evidence="1">
    <location>
        <begin position="30"/>
        <end position="59"/>
    </location>
</feature>
<feature type="region of interest" description="LID" evidence="1">
    <location>
        <begin position="122"/>
        <end position="159"/>
    </location>
</feature>
<feature type="binding site" evidence="1">
    <location>
        <begin position="10"/>
        <end position="15"/>
    </location>
    <ligand>
        <name>ATP</name>
        <dbReference type="ChEBI" id="CHEBI:30616"/>
    </ligand>
</feature>
<feature type="binding site" evidence="1">
    <location>
        <position position="31"/>
    </location>
    <ligand>
        <name>AMP</name>
        <dbReference type="ChEBI" id="CHEBI:456215"/>
    </ligand>
</feature>
<feature type="binding site" evidence="1">
    <location>
        <position position="36"/>
    </location>
    <ligand>
        <name>AMP</name>
        <dbReference type="ChEBI" id="CHEBI:456215"/>
    </ligand>
</feature>
<feature type="binding site" evidence="1">
    <location>
        <begin position="57"/>
        <end position="59"/>
    </location>
    <ligand>
        <name>AMP</name>
        <dbReference type="ChEBI" id="CHEBI:456215"/>
    </ligand>
</feature>
<feature type="binding site" evidence="1">
    <location>
        <begin position="85"/>
        <end position="88"/>
    </location>
    <ligand>
        <name>AMP</name>
        <dbReference type="ChEBI" id="CHEBI:456215"/>
    </ligand>
</feature>
<feature type="binding site" evidence="1">
    <location>
        <position position="92"/>
    </location>
    <ligand>
        <name>AMP</name>
        <dbReference type="ChEBI" id="CHEBI:456215"/>
    </ligand>
</feature>
<feature type="binding site" evidence="1">
    <location>
        <position position="123"/>
    </location>
    <ligand>
        <name>ATP</name>
        <dbReference type="ChEBI" id="CHEBI:30616"/>
    </ligand>
</feature>
<feature type="binding site" evidence="1">
    <location>
        <begin position="132"/>
        <end position="133"/>
    </location>
    <ligand>
        <name>ATP</name>
        <dbReference type="ChEBI" id="CHEBI:30616"/>
    </ligand>
</feature>
<feature type="binding site" evidence="1">
    <location>
        <position position="156"/>
    </location>
    <ligand>
        <name>AMP</name>
        <dbReference type="ChEBI" id="CHEBI:456215"/>
    </ligand>
</feature>
<feature type="binding site" evidence="1">
    <location>
        <position position="167"/>
    </location>
    <ligand>
        <name>AMP</name>
        <dbReference type="ChEBI" id="CHEBI:456215"/>
    </ligand>
</feature>
<feature type="binding site" evidence="1">
    <location>
        <position position="206"/>
    </location>
    <ligand>
        <name>ATP</name>
        <dbReference type="ChEBI" id="CHEBI:30616"/>
    </ligand>
</feature>
<protein>
    <recommendedName>
        <fullName evidence="1">Adenylate kinase</fullName>
        <shortName evidence="1">AK</shortName>
        <ecNumber evidence="1">2.7.4.3</ecNumber>
    </recommendedName>
    <alternativeName>
        <fullName evidence="1">ATP-AMP transphosphorylase</fullName>
    </alternativeName>
    <alternativeName>
        <fullName evidence="1">ATP:AMP phosphotransferase</fullName>
    </alternativeName>
    <alternativeName>
        <fullName evidence="1">Adenylate monophosphate kinase</fullName>
    </alternativeName>
</protein>
<comment type="function">
    <text evidence="1">Catalyzes the reversible transfer of the terminal phosphate group between ATP and AMP. Plays an important role in cellular energy homeostasis and in adenine nucleotide metabolism.</text>
</comment>
<comment type="catalytic activity">
    <reaction evidence="1">
        <text>AMP + ATP = 2 ADP</text>
        <dbReference type="Rhea" id="RHEA:12973"/>
        <dbReference type="ChEBI" id="CHEBI:30616"/>
        <dbReference type="ChEBI" id="CHEBI:456215"/>
        <dbReference type="ChEBI" id="CHEBI:456216"/>
        <dbReference type="EC" id="2.7.4.3"/>
    </reaction>
</comment>
<comment type="pathway">
    <text evidence="1">Purine metabolism; AMP biosynthesis via salvage pathway; AMP from ADP: step 1/1.</text>
</comment>
<comment type="subunit">
    <text evidence="1">Monomer.</text>
</comment>
<comment type="subcellular location">
    <subcellularLocation>
        <location evidence="1">Cytoplasm</location>
    </subcellularLocation>
</comment>
<comment type="domain">
    <text evidence="1">Consists of three domains, a large central CORE domain and two small peripheral domains, NMPbind and LID, which undergo movements during catalysis. The LID domain closes over the site of phosphoryl transfer upon ATP binding. Assembling and dissambling the active center during each catalytic cycle provides an effective means to prevent ATP hydrolysis.</text>
</comment>
<comment type="similarity">
    <text evidence="1">Belongs to the adenylate kinase family.</text>
</comment>
<gene>
    <name evidence="1" type="primary">adk</name>
    <name type="ordered locus">BMASAVP1_A0572</name>
</gene>
<proteinExistence type="inferred from homology"/>
<accession>A1V117</accession>
<sequence length="220" mass="24170">MRLILLGAPGAGKGTQANFIKEKFGIPQISTGDMLRAAVKAGTPLGVEAKTYMDEGKLVPDSLIIGLVKERLKEADCANGYLFDGFPRTIAQADAMKEAGVAIDYVLEIDVPFSEIIERMSGRRTHPASGRTYHVKFNPPKVEGKDDVTGEPLVQRDDDKEETVKKRLDVYEAQTKPLITYYGDWARRGAENGLKAPAYRKISGLGAVEEIRARVFDALK</sequence>
<evidence type="ECO:0000255" key="1">
    <source>
        <dbReference type="HAMAP-Rule" id="MF_00235"/>
    </source>
</evidence>
<reference key="1">
    <citation type="journal article" date="2010" name="Genome Biol. Evol.">
        <title>Continuing evolution of Burkholderia mallei through genome reduction and large-scale rearrangements.</title>
        <authorList>
            <person name="Losada L."/>
            <person name="Ronning C.M."/>
            <person name="DeShazer D."/>
            <person name="Woods D."/>
            <person name="Fedorova N."/>
            <person name="Kim H.S."/>
            <person name="Shabalina S.A."/>
            <person name="Pearson T.R."/>
            <person name="Brinkac L."/>
            <person name="Tan P."/>
            <person name="Nandi T."/>
            <person name="Crabtree J."/>
            <person name="Badger J."/>
            <person name="Beckstrom-Sternberg S."/>
            <person name="Saqib M."/>
            <person name="Schutzer S.E."/>
            <person name="Keim P."/>
            <person name="Nierman W.C."/>
        </authorList>
    </citation>
    <scope>NUCLEOTIDE SEQUENCE [LARGE SCALE GENOMIC DNA]</scope>
    <source>
        <strain>SAVP1</strain>
    </source>
</reference>
<organism>
    <name type="scientific">Burkholderia mallei (strain SAVP1)</name>
    <dbReference type="NCBI Taxonomy" id="320388"/>
    <lineage>
        <taxon>Bacteria</taxon>
        <taxon>Pseudomonadati</taxon>
        <taxon>Pseudomonadota</taxon>
        <taxon>Betaproteobacteria</taxon>
        <taxon>Burkholderiales</taxon>
        <taxon>Burkholderiaceae</taxon>
        <taxon>Burkholderia</taxon>
        <taxon>pseudomallei group</taxon>
    </lineage>
</organism>
<dbReference type="EC" id="2.7.4.3" evidence="1"/>
<dbReference type="EMBL" id="CP000526">
    <property type="protein sequence ID" value="ABM50404.1"/>
    <property type="molecule type" value="Genomic_DNA"/>
</dbReference>
<dbReference type="RefSeq" id="WP_004185840.1">
    <property type="nucleotide sequence ID" value="NC_008785.1"/>
</dbReference>
<dbReference type="SMR" id="A1V117"/>
<dbReference type="GeneID" id="93059382"/>
<dbReference type="KEGG" id="bmv:BMASAVP1_A0572"/>
<dbReference type="HOGENOM" id="CLU_032354_1_2_4"/>
<dbReference type="UniPathway" id="UPA00588">
    <property type="reaction ID" value="UER00649"/>
</dbReference>
<dbReference type="GO" id="GO:0005737">
    <property type="term" value="C:cytoplasm"/>
    <property type="evidence" value="ECO:0007669"/>
    <property type="project" value="UniProtKB-SubCell"/>
</dbReference>
<dbReference type="GO" id="GO:0004017">
    <property type="term" value="F:adenylate kinase activity"/>
    <property type="evidence" value="ECO:0007669"/>
    <property type="project" value="UniProtKB-UniRule"/>
</dbReference>
<dbReference type="GO" id="GO:0005524">
    <property type="term" value="F:ATP binding"/>
    <property type="evidence" value="ECO:0007669"/>
    <property type="project" value="UniProtKB-UniRule"/>
</dbReference>
<dbReference type="GO" id="GO:0044209">
    <property type="term" value="P:AMP salvage"/>
    <property type="evidence" value="ECO:0007669"/>
    <property type="project" value="UniProtKB-UniRule"/>
</dbReference>
<dbReference type="CDD" id="cd01428">
    <property type="entry name" value="ADK"/>
    <property type="match status" value="1"/>
</dbReference>
<dbReference type="FunFam" id="3.40.50.300:FF:000106">
    <property type="entry name" value="Adenylate kinase mitochondrial"/>
    <property type="match status" value="1"/>
</dbReference>
<dbReference type="Gene3D" id="3.40.50.300">
    <property type="entry name" value="P-loop containing nucleotide triphosphate hydrolases"/>
    <property type="match status" value="1"/>
</dbReference>
<dbReference type="HAMAP" id="MF_00235">
    <property type="entry name" value="Adenylate_kinase_Adk"/>
    <property type="match status" value="1"/>
</dbReference>
<dbReference type="InterPro" id="IPR006259">
    <property type="entry name" value="Adenyl_kin_sub"/>
</dbReference>
<dbReference type="InterPro" id="IPR000850">
    <property type="entry name" value="Adenylat/UMP-CMP_kin"/>
</dbReference>
<dbReference type="InterPro" id="IPR033690">
    <property type="entry name" value="Adenylat_kinase_CS"/>
</dbReference>
<dbReference type="InterPro" id="IPR007862">
    <property type="entry name" value="Adenylate_kinase_lid-dom"/>
</dbReference>
<dbReference type="InterPro" id="IPR027417">
    <property type="entry name" value="P-loop_NTPase"/>
</dbReference>
<dbReference type="NCBIfam" id="TIGR01351">
    <property type="entry name" value="adk"/>
    <property type="match status" value="1"/>
</dbReference>
<dbReference type="NCBIfam" id="NF001379">
    <property type="entry name" value="PRK00279.1-1"/>
    <property type="match status" value="1"/>
</dbReference>
<dbReference type="NCBIfam" id="NF001380">
    <property type="entry name" value="PRK00279.1-2"/>
    <property type="match status" value="1"/>
</dbReference>
<dbReference type="NCBIfam" id="NF001381">
    <property type="entry name" value="PRK00279.1-3"/>
    <property type="match status" value="1"/>
</dbReference>
<dbReference type="NCBIfam" id="NF011100">
    <property type="entry name" value="PRK14527.1"/>
    <property type="match status" value="1"/>
</dbReference>
<dbReference type="PANTHER" id="PTHR23359">
    <property type="entry name" value="NUCLEOTIDE KINASE"/>
    <property type="match status" value="1"/>
</dbReference>
<dbReference type="Pfam" id="PF00406">
    <property type="entry name" value="ADK"/>
    <property type="match status" value="1"/>
</dbReference>
<dbReference type="Pfam" id="PF05191">
    <property type="entry name" value="ADK_lid"/>
    <property type="match status" value="1"/>
</dbReference>
<dbReference type="PRINTS" id="PR00094">
    <property type="entry name" value="ADENYLTKNASE"/>
</dbReference>
<dbReference type="SUPFAM" id="SSF52540">
    <property type="entry name" value="P-loop containing nucleoside triphosphate hydrolases"/>
    <property type="match status" value="1"/>
</dbReference>
<dbReference type="PROSITE" id="PS00113">
    <property type="entry name" value="ADENYLATE_KINASE"/>
    <property type="match status" value="1"/>
</dbReference>